<name>A1LC_LOXAR</name>
<keyword id="KW-0204">Cytolysis</keyword>
<keyword id="KW-1061">Dermonecrotic toxin</keyword>
<keyword id="KW-1015">Disulfide bond</keyword>
<keyword id="KW-0325">Glycoprotein</keyword>
<keyword id="KW-0354">Hemolysis</keyword>
<keyword id="KW-0442">Lipid degradation</keyword>
<keyword id="KW-0443">Lipid metabolism</keyword>
<keyword id="KW-0456">Lyase</keyword>
<keyword id="KW-0460">Magnesium</keyword>
<keyword id="KW-0479">Metal-binding</keyword>
<keyword id="KW-0964">Secreted</keyword>
<keyword id="KW-0800">Toxin</keyword>
<accession>C0JAU6</accession>
<sequence length="276" mass="31618">WIMGHMVNAIYQIDEFVDLGANSIEVDVSFDDNAKPEYTYHGIPCDCRRWCTKWEYFNDFLKALRKATTPGDSKYHEKLVLVVFDLKTNSLYNYQAYDAGKKLAENLLQHYWNNGNNGGRAYIVLSIPNLAHYQLITGFKETLKNKGHPELMDKVGHDFSGNDNIDQVEKAYKKAGVTGHVWQSDGITNCIASFIRGLDRAKKAVKNRDSSNGYINKVYYWTVDKYATTREALDIGVDGIMTNYPDVIANVLNESAYKEKFRLATYDDNPWEAFKN</sequence>
<feature type="chain" id="PRO_0000392796" description="Dermonecrotic toxin LarSicTox-alphaIB2c">
    <location>
        <begin position="1" status="less than"/>
        <end position="276"/>
    </location>
</feature>
<feature type="active site" evidence="5">
    <location>
        <position position="5"/>
    </location>
</feature>
<feature type="active site" description="Nucleophile" evidence="5">
    <location>
        <position position="41"/>
    </location>
</feature>
<feature type="binding site" evidence="5">
    <location>
        <position position="25"/>
    </location>
    <ligand>
        <name>Mg(2+)</name>
        <dbReference type="ChEBI" id="CHEBI:18420"/>
    </ligand>
</feature>
<feature type="binding site" evidence="5">
    <location>
        <position position="27"/>
    </location>
    <ligand>
        <name>Mg(2+)</name>
        <dbReference type="ChEBI" id="CHEBI:18420"/>
    </ligand>
</feature>
<feature type="binding site" evidence="5">
    <location>
        <position position="85"/>
    </location>
    <ligand>
        <name>Mg(2+)</name>
        <dbReference type="ChEBI" id="CHEBI:18420"/>
    </ligand>
</feature>
<feature type="glycosylation site" description="N-linked (GlcNAc...) asparagine" evidence="6">
    <location>
        <position position="253"/>
    </location>
</feature>
<feature type="disulfide bond" evidence="3">
    <location>
        <begin position="45"/>
        <end position="51"/>
    </location>
</feature>
<feature type="disulfide bond" evidence="3">
    <location>
        <begin position="47"/>
        <end position="190"/>
    </location>
</feature>
<feature type="non-terminal residue">
    <location>
        <position position="1"/>
    </location>
</feature>
<protein>
    <recommendedName>
        <fullName evidence="7">Dermonecrotic toxin LarSicTox-alphaIB2c</fullName>
        <ecNumber evidence="4">4.6.1.-</ecNumber>
    </recommendedName>
    <alternativeName>
        <fullName>Phospholipase D</fullName>
        <shortName>PLD</shortName>
    </alternativeName>
    <alternativeName>
        <fullName>Sphingomyelin phosphodiesterase D</fullName>
        <shortName>SMD</shortName>
        <shortName>SMase D</shortName>
        <shortName>Sphingomyelinase D</shortName>
    </alternativeName>
</protein>
<dbReference type="EC" id="4.6.1.-" evidence="4"/>
<dbReference type="EMBL" id="FJ171381">
    <property type="protein sequence ID" value="ACN48877.1"/>
    <property type="molecule type" value="mRNA"/>
</dbReference>
<dbReference type="SMR" id="C0JAU6"/>
<dbReference type="GO" id="GO:0005576">
    <property type="term" value="C:extracellular region"/>
    <property type="evidence" value="ECO:0007669"/>
    <property type="project" value="UniProtKB-SubCell"/>
</dbReference>
<dbReference type="GO" id="GO:0016829">
    <property type="term" value="F:lyase activity"/>
    <property type="evidence" value="ECO:0007669"/>
    <property type="project" value="UniProtKB-KW"/>
</dbReference>
<dbReference type="GO" id="GO:0046872">
    <property type="term" value="F:metal ion binding"/>
    <property type="evidence" value="ECO:0007669"/>
    <property type="project" value="UniProtKB-KW"/>
</dbReference>
<dbReference type="GO" id="GO:0008081">
    <property type="term" value="F:phosphoric diester hydrolase activity"/>
    <property type="evidence" value="ECO:0007669"/>
    <property type="project" value="InterPro"/>
</dbReference>
<dbReference type="GO" id="GO:0090729">
    <property type="term" value="F:toxin activity"/>
    <property type="evidence" value="ECO:0007669"/>
    <property type="project" value="UniProtKB-KW"/>
</dbReference>
<dbReference type="GO" id="GO:0031640">
    <property type="term" value="P:killing of cells of another organism"/>
    <property type="evidence" value="ECO:0007669"/>
    <property type="project" value="UniProtKB-KW"/>
</dbReference>
<dbReference type="GO" id="GO:0016042">
    <property type="term" value="P:lipid catabolic process"/>
    <property type="evidence" value="ECO:0007669"/>
    <property type="project" value="UniProtKB-KW"/>
</dbReference>
<dbReference type="CDD" id="cd08576">
    <property type="entry name" value="GDPD_like_SMaseD_PLD"/>
    <property type="match status" value="1"/>
</dbReference>
<dbReference type="Gene3D" id="3.20.20.190">
    <property type="entry name" value="Phosphatidylinositol (PI) phosphodiesterase"/>
    <property type="match status" value="1"/>
</dbReference>
<dbReference type="InterPro" id="IPR017946">
    <property type="entry name" value="PLC-like_Pdiesterase_TIM-brl"/>
</dbReference>
<dbReference type="Pfam" id="PF13653">
    <property type="entry name" value="GDPD_2"/>
    <property type="match status" value="1"/>
</dbReference>
<dbReference type="SUPFAM" id="SSF51695">
    <property type="entry name" value="PLC-like phosphodiesterases"/>
    <property type="match status" value="1"/>
</dbReference>
<reference key="1">
    <citation type="journal article" date="2009" name="Mol. Biol. Evol.">
        <title>Molecular evolution, functional variation, and proposed nomenclature of the gene family that includes sphingomyelinase D in sicariid spider venoms.</title>
        <authorList>
            <person name="Binford G.J."/>
            <person name="Bodner M.R."/>
            <person name="Cordes M.H."/>
            <person name="Baldwin K.L."/>
            <person name="Rynerson M.R."/>
            <person name="Burns S.N."/>
            <person name="Zobel-Thropp P.A."/>
        </authorList>
    </citation>
    <scope>NUCLEOTIDE SEQUENCE [MRNA]</scope>
    <scope>NOMENCLATURE</scope>
    <source>
        <tissue>Venom gland</tissue>
    </source>
</reference>
<proteinExistence type="evidence at transcript level"/>
<comment type="function">
    <text evidence="1 3">Dermonecrotic toxins cleave the phosphodiester linkage between the phosphate and headgroup of certain phospholipids (sphingolipid and lysolipid substrates), forming an alcohol (often choline) and a cyclic phosphate (By similarity). This toxin acts on sphingomyelin (SM) (By similarity). It may also act on ceramide phosphoethanolamine (CPE), lysophosphatidylcholine (LPC) and lysophosphatidylethanolamine (LPE), but not on lysophosphatidylserine (LPS), and lysophosphatidylglycerol (LPG) (By similarity). It acts by transphosphatidylation, releasing exclusively cyclic phosphate products as second products (By similarity). Induces dermonecrosis, hemolysis, increased vascular permeability, edema, inflammatory response, and platelet aggregation (By similarity).</text>
</comment>
<comment type="catalytic activity">
    <reaction evidence="1">
        <text>an N-(acyl)-sphingosylphosphocholine = an N-(acyl)-sphingosyl-1,3-cyclic phosphate + choline</text>
        <dbReference type="Rhea" id="RHEA:60652"/>
        <dbReference type="ChEBI" id="CHEBI:15354"/>
        <dbReference type="ChEBI" id="CHEBI:64583"/>
        <dbReference type="ChEBI" id="CHEBI:143892"/>
    </reaction>
</comment>
<comment type="catalytic activity">
    <reaction evidence="1">
        <text>an N-(acyl)-sphingosylphosphoethanolamine = an N-(acyl)-sphingosyl-1,3-cyclic phosphate + ethanolamine</text>
        <dbReference type="Rhea" id="RHEA:60648"/>
        <dbReference type="ChEBI" id="CHEBI:57603"/>
        <dbReference type="ChEBI" id="CHEBI:143891"/>
        <dbReference type="ChEBI" id="CHEBI:143892"/>
    </reaction>
</comment>
<comment type="catalytic activity">
    <reaction evidence="1">
        <text>a 1-acyl-sn-glycero-3-phosphocholine = a 1-acyl-sn-glycero-2,3-cyclic phosphate + choline</text>
        <dbReference type="Rhea" id="RHEA:60700"/>
        <dbReference type="ChEBI" id="CHEBI:15354"/>
        <dbReference type="ChEBI" id="CHEBI:58168"/>
        <dbReference type="ChEBI" id="CHEBI:143947"/>
    </reaction>
</comment>
<comment type="catalytic activity">
    <reaction evidence="1">
        <text>a 1-acyl-sn-glycero-3-phosphoethanolamine = a 1-acyl-sn-glycero-2,3-cyclic phosphate + ethanolamine</text>
        <dbReference type="Rhea" id="RHEA:60704"/>
        <dbReference type="ChEBI" id="CHEBI:57603"/>
        <dbReference type="ChEBI" id="CHEBI:64381"/>
        <dbReference type="ChEBI" id="CHEBI:143947"/>
    </reaction>
</comment>
<comment type="cofactor">
    <cofactor evidence="5">
        <name>Mg(2+)</name>
        <dbReference type="ChEBI" id="CHEBI:18420"/>
    </cofactor>
    <text evidence="5">Binds 1 Mg(2+) ion per subunit.</text>
</comment>
<comment type="subcellular location">
    <subcellularLocation>
        <location evidence="9">Secreted</location>
    </subcellularLocation>
</comment>
<comment type="tissue specificity">
    <text evidence="9">Expressed by the venom gland.</text>
</comment>
<comment type="similarity">
    <text evidence="8">Belongs to the arthropod phospholipase D family. Class II subfamily.</text>
</comment>
<comment type="caution">
    <text evidence="1 2 4">The most common activity assay for dermonecrotic toxins detects enzymatic activity by monitoring choline release from substrate. Liberation of choline from sphingomyelin (SM) or lysophosphatidylcholine (LPC) is commonly assumed to result from substrate hydrolysis, giving either ceramide-1-phosphate (C1P) or lysophosphatidic acid (LPA), respectively, as a second product. However, two studies from Lajoie and colleagues (2013 and 2015) report the observation of exclusive formation of cyclic phosphate products as second products, resulting from intramolecular transphosphatidylation. Cyclic phosphates have vastly different biological properties from their monoester counterparts, and they may be relevant to the pathology of brown spider envenomation.</text>
</comment>
<organism>
    <name type="scientific">Loxosceles arizonica</name>
    <name type="common">Arizona brown spider</name>
    <dbReference type="NCBI Taxonomy" id="196454"/>
    <lineage>
        <taxon>Eukaryota</taxon>
        <taxon>Metazoa</taxon>
        <taxon>Ecdysozoa</taxon>
        <taxon>Arthropoda</taxon>
        <taxon>Chelicerata</taxon>
        <taxon>Arachnida</taxon>
        <taxon>Araneae</taxon>
        <taxon>Araneomorphae</taxon>
        <taxon>Haplogynae</taxon>
        <taxon>Scytodoidea</taxon>
        <taxon>Sicariidae</taxon>
        <taxon>Loxosceles</taxon>
    </lineage>
</organism>
<evidence type="ECO:0000250" key="1">
    <source>
        <dbReference type="UniProtKB" id="A0A0D4WTV1"/>
    </source>
</evidence>
<evidence type="ECO:0000250" key="2">
    <source>
        <dbReference type="UniProtKB" id="A0A0D4WV12"/>
    </source>
</evidence>
<evidence type="ECO:0000250" key="3">
    <source>
        <dbReference type="UniProtKB" id="P0CE80"/>
    </source>
</evidence>
<evidence type="ECO:0000250" key="4">
    <source>
        <dbReference type="UniProtKB" id="Q4ZFU2"/>
    </source>
</evidence>
<evidence type="ECO:0000250" key="5">
    <source>
        <dbReference type="UniProtKB" id="Q8I914"/>
    </source>
</evidence>
<evidence type="ECO:0000255" key="6"/>
<evidence type="ECO:0000303" key="7">
    <source>
    </source>
</evidence>
<evidence type="ECO:0000305" key="8"/>
<evidence type="ECO:0000305" key="9">
    <source>
    </source>
</evidence>